<evidence type="ECO:0000255" key="1">
    <source>
        <dbReference type="HAMAP-Rule" id="MF_00318"/>
    </source>
</evidence>
<accession>B1ZEJ8</accession>
<reference key="1">
    <citation type="submission" date="2008-04" db="EMBL/GenBank/DDBJ databases">
        <title>Complete sequence of chromosome of Methylobacterium populi BJ001.</title>
        <authorList>
            <consortium name="US DOE Joint Genome Institute"/>
            <person name="Copeland A."/>
            <person name="Lucas S."/>
            <person name="Lapidus A."/>
            <person name="Glavina del Rio T."/>
            <person name="Dalin E."/>
            <person name="Tice H."/>
            <person name="Bruce D."/>
            <person name="Goodwin L."/>
            <person name="Pitluck S."/>
            <person name="Chertkov O."/>
            <person name="Brettin T."/>
            <person name="Detter J.C."/>
            <person name="Han C."/>
            <person name="Kuske C.R."/>
            <person name="Schmutz J."/>
            <person name="Larimer F."/>
            <person name="Land M."/>
            <person name="Hauser L."/>
            <person name="Kyrpides N."/>
            <person name="Mikhailova N."/>
            <person name="Marx C."/>
            <person name="Richardson P."/>
        </authorList>
    </citation>
    <scope>NUCLEOTIDE SEQUENCE [LARGE SCALE GENOMIC DNA]</scope>
    <source>
        <strain>ATCC BAA-705 / NCIMB 13946 / BJ001</strain>
    </source>
</reference>
<organism>
    <name type="scientific">Methylorubrum populi (strain ATCC BAA-705 / NCIMB 13946 / BJ001)</name>
    <name type="common">Methylobacterium populi</name>
    <dbReference type="NCBI Taxonomy" id="441620"/>
    <lineage>
        <taxon>Bacteria</taxon>
        <taxon>Pseudomonadati</taxon>
        <taxon>Pseudomonadota</taxon>
        <taxon>Alphaproteobacteria</taxon>
        <taxon>Hyphomicrobiales</taxon>
        <taxon>Methylobacteriaceae</taxon>
        <taxon>Methylorubrum</taxon>
    </lineage>
</organism>
<sequence>MTAITNIAAREILDSRGNPTVEVDVLLEDGSFGRAAVPSGASTGAHEAVELRDGDKGRYNGKGVLKAVDAVQTEILDAIGGMDAEDQVAVDEAMITLDGTPNKARLGANAILGVSLAVAKAAAETAGLPLYRYVGGVQGRVLPVPMMNIVNGGAHADNPIDFQEFMVMPVGATSLSDAVRMGAEIFHTLKSALKKAGHNTNVGDEGGFAPNLPSAEAALDFVMESINAAGFKPGSDVVLALDCAATEFFKDGAYHYEGEGQTRSIEQQVEYLAKLTEAYPILSIEDGMSEDDWEGWKLLTDRIGNRVQLVGDDLFVTNVERLARGIETGTGNSILVKVNQIGSLTETLAAVDMAQRAGYTAVMSHRSGETEDSTIADLAVATNCGQIKTGSLARSDRLAKYNQLIRIEEGLGAQALYAGRSAIRQLAGR</sequence>
<gene>
    <name evidence="1" type="primary">eno</name>
    <name type="ordered locus">Mpop_2907</name>
</gene>
<proteinExistence type="inferred from homology"/>
<name>ENO_METPB</name>
<protein>
    <recommendedName>
        <fullName evidence="1">Enolase</fullName>
        <ecNumber evidence="1">4.2.1.11</ecNumber>
    </recommendedName>
    <alternativeName>
        <fullName evidence="1">2-phospho-D-glycerate hydro-lyase</fullName>
    </alternativeName>
    <alternativeName>
        <fullName evidence="1">2-phosphoglycerate dehydratase</fullName>
    </alternativeName>
</protein>
<keyword id="KW-0963">Cytoplasm</keyword>
<keyword id="KW-0324">Glycolysis</keyword>
<keyword id="KW-0456">Lyase</keyword>
<keyword id="KW-0460">Magnesium</keyword>
<keyword id="KW-0479">Metal-binding</keyword>
<keyword id="KW-0964">Secreted</keyword>
<dbReference type="EC" id="4.2.1.11" evidence="1"/>
<dbReference type="EMBL" id="CP001029">
    <property type="protein sequence ID" value="ACB81062.1"/>
    <property type="molecule type" value="Genomic_DNA"/>
</dbReference>
<dbReference type="RefSeq" id="WP_012454782.1">
    <property type="nucleotide sequence ID" value="NC_010725.1"/>
</dbReference>
<dbReference type="SMR" id="B1ZEJ8"/>
<dbReference type="STRING" id="441620.Mpop_2907"/>
<dbReference type="KEGG" id="mpo:Mpop_2907"/>
<dbReference type="eggNOG" id="COG0148">
    <property type="taxonomic scope" value="Bacteria"/>
</dbReference>
<dbReference type="HOGENOM" id="CLU_031223_2_1_5"/>
<dbReference type="OrthoDB" id="9804716at2"/>
<dbReference type="UniPathway" id="UPA00109">
    <property type="reaction ID" value="UER00187"/>
</dbReference>
<dbReference type="Proteomes" id="UP000007136">
    <property type="component" value="Chromosome"/>
</dbReference>
<dbReference type="GO" id="GO:0009986">
    <property type="term" value="C:cell surface"/>
    <property type="evidence" value="ECO:0007669"/>
    <property type="project" value="UniProtKB-SubCell"/>
</dbReference>
<dbReference type="GO" id="GO:0005576">
    <property type="term" value="C:extracellular region"/>
    <property type="evidence" value="ECO:0007669"/>
    <property type="project" value="UniProtKB-SubCell"/>
</dbReference>
<dbReference type="GO" id="GO:0000015">
    <property type="term" value="C:phosphopyruvate hydratase complex"/>
    <property type="evidence" value="ECO:0007669"/>
    <property type="project" value="InterPro"/>
</dbReference>
<dbReference type="GO" id="GO:0000287">
    <property type="term" value="F:magnesium ion binding"/>
    <property type="evidence" value="ECO:0007669"/>
    <property type="project" value="UniProtKB-UniRule"/>
</dbReference>
<dbReference type="GO" id="GO:0004634">
    <property type="term" value="F:phosphopyruvate hydratase activity"/>
    <property type="evidence" value="ECO:0007669"/>
    <property type="project" value="UniProtKB-UniRule"/>
</dbReference>
<dbReference type="GO" id="GO:0006096">
    <property type="term" value="P:glycolytic process"/>
    <property type="evidence" value="ECO:0007669"/>
    <property type="project" value="UniProtKB-UniRule"/>
</dbReference>
<dbReference type="CDD" id="cd03313">
    <property type="entry name" value="enolase"/>
    <property type="match status" value="1"/>
</dbReference>
<dbReference type="FunFam" id="3.20.20.120:FF:000001">
    <property type="entry name" value="Enolase"/>
    <property type="match status" value="1"/>
</dbReference>
<dbReference type="FunFam" id="3.30.390.10:FF:000001">
    <property type="entry name" value="Enolase"/>
    <property type="match status" value="1"/>
</dbReference>
<dbReference type="Gene3D" id="3.20.20.120">
    <property type="entry name" value="Enolase-like C-terminal domain"/>
    <property type="match status" value="1"/>
</dbReference>
<dbReference type="Gene3D" id="3.30.390.10">
    <property type="entry name" value="Enolase-like, N-terminal domain"/>
    <property type="match status" value="1"/>
</dbReference>
<dbReference type="HAMAP" id="MF_00318">
    <property type="entry name" value="Enolase"/>
    <property type="match status" value="1"/>
</dbReference>
<dbReference type="InterPro" id="IPR000941">
    <property type="entry name" value="Enolase"/>
</dbReference>
<dbReference type="InterPro" id="IPR036849">
    <property type="entry name" value="Enolase-like_C_sf"/>
</dbReference>
<dbReference type="InterPro" id="IPR029017">
    <property type="entry name" value="Enolase-like_N"/>
</dbReference>
<dbReference type="InterPro" id="IPR020810">
    <property type="entry name" value="Enolase_C"/>
</dbReference>
<dbReference type="InterPro" id="IPR020809">
    <property type="entry name" value="Enolase_CS"/>
</dbReference>
<dbReference type="InterPro" id="IPR020811">
    <property type="entry name" value="Enolase_N"/>
</dbReference>
<dbReference type="NCBIfam" id="TIGR01060">
    <property type="entry name" value="eno"/>
    <property type="match status" value="1"/>
</dbReference>
<dbReference type="PANTHER" id="PTHR11902">
    <property type="entry name" value="ENOLASE"/>
    <property type="match status" value="1"/>
</dbReference>
<dbReference type="PANTHER" id="PTHR11902:SF1">
    <property type="entry name" value="ENOLASE"/>
    <property type="match status" value="1"/>
</dbReference>
<dbReference type="Pfam" id="PF00113">
    <property type="entry name" value="Enolase_C"/>
    <property type="match status" value="1"/>
</dbReference>
<dbReference type="Pfam" id="PF03952">
    <property type="entry name" value="Enolase_N"/>
    <property type="match status" value="1"/>
</dbReference>
<dbReference type="PIRSF" id="PIRSF001400">
    <property type="entry name" value="Enolase"/>
    <property type="match status" value="1"/>
</dbReference>
<dbReference type="PRINTS" id="PR00148">
    <property type="entry name" value="ENOLASE"/>
</dbReference>
<dbReference type="SFLD" id="SFLDS00001">
    <property type="entry name" value="Enolase"/>
    <property type="match status" value="1"/>
</dbReference>
<dbReference type="SFLD" id="SFLDF00002">
    <property type="entry name" value="enolase"/>
    <property type="match status" value="1"/>
</dbReference>
<dbReference type="SMART" id="SM01192">
    <property type="entry name" value="Enolase_C"/>
    <property type="match status" value="1"/>
</dbReference>
<dbReference type="SMART" id="SM01193">
    <property type="entry name" value="Enolase_N"/>
    <property type="match status" value="1"/>
</dbReference>
<dbReference type="SUPFAM" id="SSF51604">
    <property type="entry name" value="Enolase C-terminal domain-like"/>
    <property type="match status" value="1"/>
</dbReference>
<dbReference type="SUPFAM" id="SSF54826">
    <property type="entry name" value="Enolase N-terminal domain-like"/>
    <property type="match status" value="1"/>
</dbReference>
<dbReference type="PROSITE" id="PS00164">
    <property type="entry name" value="ENOLASE"/>
    <property type="match status" value="1"/>
</dbReference>
<comment type="function">
    <text evidence="1">Catalyzes the reversible conversion of 2-phosphoglycerate (2-PG) into phosphoenolpyruvate (PEP). It is essential for the degradation of carbohydrates via glycolysis.</text>
</comment>
<comment type="catalytic activity">
    <reaction evidence="1">
        <text>(2R)-2-phosphoglycerate = phosphoenolpyruvate + H2O</text>
        <dbReference type="Rhea" id="RHEA:10164"/>
        <dbReference type="ChEBI" id="CHEBI:15377"/>
        <dbReference type="ChEBI" id="CHEBI:58289"/>
        <dbReference type="ChEBI" id="CHEBI:58702"/>
        <dbReference type="EC" id="4.2.1.11"/>
    </reaction>
</comment>
<comment type="cofactor">
    <cofactor evidence="1">
        <name>Mg(2+)</name>
        <dbReference type="ChEBI" id="CHEBI:18420"/>
    </cofactor>
    <text evidence="1">Binds a second Mg(2+) ion via substrate during catalysis.</text>
</comment>
<comment type="pathway">
    <text evidence="1">Carbohydrate degradation; glycolysis; pyruvate from D-glyceraldehyde 3-phosphate: step 4/5.</text>
</comment>
<comment type="subcellular location">
    <subcellularLocation>
        <location evidence="1">Cytoplasm</location>
    </subcellularLocation>
    <subcellularLocation>
        <location evidence="1">Secreted</location>
    </subcellularLocation>
    <subcellularLocation>
        <location evidence="1">Cell surface</location>
    </subcellularLocation>
    <text evidence="1">Fractions of enolase are present in both the cytoplasm and on the cell surface.</text>
</comment>
<comment type="similarity">
    <text evidence="1">Belongs to the enolase family.</text>
</comment>
<feature type="chain" id="PRO_1000115884" description="Enolase">
    <location>
        <begin position="1"/>
        <end position="429"/>
    </location>
</feature>
<feature type="active site" description="Proton donor" evidence="1">
    <location>
        <position position="205"/>
    </location>
</feature>
<feature type="active site" description="Proton acceptor" evidence="1">
    <location>
        <position position="337"/>
    </location>
</feature>
<feature type="binding site" evidence="1">
    <location>
        <position position="163"/>
    </location>
    <ligand>
        <name>(2R)-2-phosphoglycerate</name>
        <dbReference type="ChEBI" id="CHEBI:58289"/>
    </ligand>
</feature>
<feature type="binding site" evidence="1">
    <location>
        <position position="242"/>
    </location>
    <ligand>
        <name>Mg(2+)</name>
        <dbReference type="ChEBI" id="CHEBI:18420"/>
    </ligand>
</feature>
<feature type="binding site" evidence="1">
    <location>
        <position position="285"/>
    </location>
    <ligand>
        <name>Mg(2+)</name>
        <dbReference type="ChEBI" id="CHEBI:18420"/>
    </ligand>
</feature>
<feature type="binding site" evidence="1">
    <location>
        <position position="312"/>
    </location>
    <ligand>
        <name>Mg(2+)</name>
        <dbReference type="ChEBI" id="CHEBI:18420"/>
    </ligand>
</feature>
<feature type="binding site" evidence="1">
    <location>
        <position position="337"/>
    </location>
    <ligand>
        <name>(2R)-2-phosphoglycerate</name>
        <dbReference type="ChEBI" id="CHEBI:58289"/>
    </ligand>
</feature>
<feature type="binding site" evidence="1">
    <location>
        <position position="366"/>
    </location>
    <ligand>
        <name>(2R)-2-phosphoglycerate</name>
        <dbReference type="ChEBI" id="CHEBI:58289"/>
    </ligand>
</feature>
<feature type="binding site" evidence="1">
    <location>
        <position position="367"/>
    </location>
    <ligand>
        <name>(2R)-2-phosphoglycerate</name>
        <dbReference type="ChEBI" id="CHEBI:58289"/>
    </ligand>
</feature>
<feature type="binding site" evidence="1">
    <location>
        <position position="388"/>
    </location>
    <ligand>
        <name>(2R)-2-phosphoglycerate</name>
        <dbReference type="ChEBI" id="CHEBI:58289"/>
    </ligand>
</feature>